<comment type="function">
    <text evidence="1">This protein binds specifically to 23S rRNA; its binding is stimulated by other ribosomal proteins, e.g. L4, L17, and L20. It is important during the early stages of 50S assembly. It makes multiple contacts with different domains of the 23S rRNA in the assembled 50S subunit and ribosome (By similarity).</text>
</comment>
<comment type="function">
    <text evidence="1">The globular domain of the protein is located near the polypeptide exit tunnel on the outside of the subunit, while an extended beta-hairpin is found that lines the wall of the exit tunnel in the center of the 70S ribosome.</text>
</comment>
<comment type="subunit">
    <text evidence="1">Part of the 50S ribosomal subunit.</text>
</comment>
<comment type="similarity">
    <text evidence="1">Belongs to the universal ribosomal protein uL22 family.</text>
</comment>
<sequence length="110" mass="12156">METIAKHRHARSSAQKVRLVADLIRGKKVSQALETLAYTNKKAAGLVKKVLESAIANAEHNDGADIDDLKVTKIFVDEGPSMKRIMPRAKGRADRILKRTSHITVVVSDR</sequence>
<feature type="chain" id="PRO_1000067612" description="Large ribosomal subunit protein uL22">
    <location>
        <begin position="1"/>
        <end position="110"/>
    </location>
</feature>
<protein>
    <recommendedName>
        <fullName evidence="1">Large ribosomal subunit protein uL22</fullName>
    </recommendedName>
    <alternativeName>
        <fullName evidence="2">50S ribosomal protein L22</fullName>
    </alternativeName>
</protein>
<name>RL22_SERP5</name>
<reference key="1">
    <citation type="submission" date="2007-09" db="EMBL/GenBank/DDBJ databases">
        <title>Complete sequence of chromosome of Serratia proteamaculans 568.</title>
        <authorList>
            <consortium name="US DOE Joint Genome Institute"/>
            <person name="Copeland A."/>
            <person name="Lucas S."/>
            <person name="Lapidus A."/>
            <person name="Barry K."/>
            <person name="Glavina del Rio T."/>
            <person name="Dalin E."/>
            <person name="Tice H."/>
            <person name="Pitluck S."/>
            <person name="Chain P."/>
            <person name="Malfatti S."/>
            <person name="Shin M."/>
            <person name="Vergez L."/>
            <person name="Schmutz J."/>
            <person name="Larimer F."/>
            <person name="Land M."/>
            <person name="Hauser L."/>
            <person name="Kyrpides N."/>
            <person name="Kim E."/>
            <person name="Taghavi S."/>
            <person name="Newman L."/>
            <person name="Vangronsveld J."/>
            <person name="van der Lelie D."/>
            <person name="Richardson P."/>
        </authorList>
    </citation>
    <scope>NUCLEOTIDE SEQUENCE [LARGE SCALE GENOMIC DNA]</scope>
    <source>
        <strain>568</strain>
    </source>
</reference>
<organism>
    <name type="scientific">Serratia proteamaculans (strain 568)</name>
    <dbReference type="NCBI Taxonomy" id="399741"/>
    <lineage>
        <taxon>Bacteria</taxon>
        <taxon>Pseudomonadati</taxon>
        <taxon>Pseudomonadota</taxon>
        <taxon>Gammaproteobacteria</taxon>
        <taxon>Enterobacterales</taxon>
        <taxon>Yersiniaceae</taxon>
        <taxon>Serratia</taxon>
    </lineage>
</organism>
<gene>
    <name evidence="1" type="primary">rplV</name>
    <name type="ordered locus">Spro_4539</name>
</gene>
<dbReference type="EMBL" id="CP000826">
    <property type="protein sequence ID" value="ABV43632.1"/>
    <property type="molecule type" value="Genomic_DNA"/>
</dbReference>
<dbReference type="SMR" id="A8GKJ2"/>
<dbReference type="STRING" id="399741.Spro_4539"/>
<dbReference type="KEGG" id="spe:Spro_4539"/>
<dbReference type="eggNOG" id="COG0091">
    <property type="taxonomic scope" value="Bacteria"/>
</dbReference>
<dbReference type="HOGENOM" id="CLU_083987_3_3_6"/>
<dbReference type="OrthoDB" id="9805969at2"/>
<dbReference type="GO" id="GO:0022625">
    <property type="term" value="C:cytosolic large ribosomal subunit"/>
    <property type="evidence" value="ECO:0007669"/>
    <property type="project" value="TreeGrafter"/>
</dbReference>
<dbReference type="GO" id="GO:0019843">
    <property type="term" value="F:rRNA binding"/>
    <property type="evidence" value="ECO:0007669"/>
    <property type="project" value="UniProtKB-UniRule"/>
</dbReference>
<dbReference type="GO" id="GO:0003735">
    <property type="term" value="F:structural constituent of ribosome"/>
    <property type="evidence" value="ECO:0007669"/>
    <property type="project" value="InterPro"/>
</dbReference>
<dbReference type="GO" id="GO:0006412">
    <property type="term" value="P:translation"/>
    <property type="evidence" value="ECO:0007669"/>
    <property type="project" value="UniProtKB-UniRule"/>
</dbReference>
<dbReference type="CDD" id="cd00336">
    <property type="entry name" value="Ribosomal_L22"/>
    <property type="match status" value="1"/>
</dbReference>
<dbReference type="FunFam" id="3.90.470.10:FF:000001">
    <property type="entry name" value="50S ribosomal protein L22"/>
    <property type="match status" value="1"/>
</dbReference>
<dbReference type="Gene3D" id="3.90.470.10">
    <property type="entry name" value="Ribosomal protein L22/L17"/>
    <property type="match status" value="1"/>
</dbReference>
<dbReference type="HAMAP" id="MF_01331_B">
    <property type="entry name" value="Ribosomal_uL22_B"/>
    <property type="match status" value="1"/>
</dbReference>
<dbReference type="InterPro" id="IPR001063">
    <property type="entry name" value="Ribosomal_uL22"/>
</dbReference>
<dbReference type="InterPro" id="IPR005727">
    <property type="entry name" value="Ribosomal_uL22_bac/chlpt-type"/>
</dbReference>
<dbReference type="InterPro" id="IPR047867">
    <property type="entry name" value="Ribosomal_uL22_bac/org-type"/>
</dbReference>
<dbReference type="InterPro" id="IPR018260">
    <property type="entry name" value="Ribosomal_uL22_CS"/>
</dbReference>
<dbReference type="InterPro" id="IPR036394">
    <property type="entry name" value="Ribosomal_uL22_sf"/>
</dbReference>
<dbReference type="NCBIfam" id="TIGR01044">
    <property type="entry name" value="rplV_bact"/>
    <property type="match status" value="1"/>
</dbReference>
<dbReference type="PANTHER" id="PTHR13501">
    <property type="entry name" value="CHLOROPLAST 50S RIBOSOMAL PROTEIN L22-RELATED"/>
    <property type="match status" value="1"/>
</dbReference>
<dbReference type="PANTHER" id="PTHR13501:SF8">
    <property type="entry name" value="LARGE RIBOSOMAL SUBUNIT PROTEIN UL22M"/>
    <property type="match status" value="1"/>
</dbReference>
<dbReference type="Pfam" id="PF00237">
    <property type="entry name" value="Ribosomal_L22"/>
    <property type="match status" value="1"/>
</dbReference>
<dbReference type="SUPFAM" id="SSF54843">
    <property type="entry name" value="Ribosomal protein L22"/>
    <property type="match status" value="1"/>
</dbReference>
<dbReference type="PROSITE" id="PS00464">
    <property type="entry name" value="RIBOSOMAL_L22"/>
    <property type="match status" value="1"/>
</dbReference>
<evidence type="ECO:0000255" key="1">
    <source>
        <dbReference type="HAMAP-Rule" id="MF_01331"/>
    </source>
</evidence>
<evidence type="ECO:0000305" key="2"/>
<proteinExistence type="inferred from homology"/>
<accession>A8GKJ2</accession>
<keyword id="KW-0687">Ribonucleoprotein</keyword>
<keyword id="KW-0689">Ribosomal protein</keyword>
<keyword id="KW-0694">RNA-binding</keyword>
<keyword id="KW-0699">rRNA-binding</keyword>